<evidence type="ECO:0000255" key="1">
    <source>
        <dbReference type="HAMAP-Rule" id="MF_00657"/>
    </source>
</evidence>
<name>Y473_ACIBT</name>
<sequence>MIHHIPNVLNKEQVAEFRKLMEEANWVGGKVTAGTLSASVKRNQQLSEQDPLTHHLSDIVIKAIWQNPLFQAAALPHKIIPPLFNRYDEHESFGFHVDNSIRLIRGTAEQIRTDLSCTLFLSEPDEYEGGDLVIEDTYGYHEVKLPAGDVVLYPSTSLHEVSSITAGTRFASFFWVQSLVRDDSKRHLLFSLDESIRELRKSHGDSYSEVMKLTNIYHNLIRMWSEL</sequence>
<dbReference type="EC" id="1.14.11.-" evidence="1"/>
<dbReference type="EMBL" id="CP000521">
    <property type="protein sequence ID" value="ABO10928.2"/>
    <property type="molecule type" value="Genomic_DNA"/>
</dbReference>
<dbReference type="RefSeq" id="WP_000581251.1">
    <property type="nucleotide sequence ID" value="NZ_CP053098.1"/>
</dbReference>
<dbReference type="SMR" id="A3M1Y4"/>
<dbReference type="KEGG" id="acb:A1S_0473"/>
<dbReference type="HOGENOM" id="CLU_106663_0_0_6"/>
<dbReference type="GO" id="GO:0016706">
    <property type="term" value="F:2-oxoglutarate-dependent dioxygenase activity"/>
    <property type="evidence" value="ECO:0007669"/>
    <property type="project" value="UniProtKB-UniRule"/>
</dbReference>
<dbReference type="GO" id="GO:0005506">
    <property type="term" value="F:iron ion binding"/>
    <property type="evidence" value="ECO:0007669"/>
    <property type="project" value="UniProtKB-UniRule"/>
</dbReference>
<dbReference type="GO" id="GO:0031418">
    <property type="term" value="F:L-ascorbic acid binding"/>
    <property type="evidence" value="ECO:0007669"/>
    <property type="project" value="UniProtKB-KW"/>
</dbReference>
<dbReference type="GO" id="GO:0006974">
    <property type="term" value="P:DNA damage response"/>
    <property type="evidence" value="ECO:0007669"/>
    <property type="project" value="TreeGrafter"/>
</dbReference>
<dbReference type="GO" id="GO:0006879">
    <property type="term" value="P:intracellular iron ion homeostasis"/>
    <property type="evidence" value="ECO:0007669"/>
    <property type="project" value="TreeGrafter"/>
</dbReference>
<dbReference type="Gene3D" id="2.60.120.620">
    <property type="entry name" value="q2cbj1_9rhob like domain"/>
    <property type="match status" value="1"/>
</dbReference>
<dbReference type="Gene3D" id="4.10.860.20">
    <property type="entry name" value="Rabenosyn, Rab binding domain"/>
    <property type="match status" value="1"/>
</dbReference>
<dbReference type="HAMAP" id="MF_00657">
    <property type="entry name" value="Hydroxyl_YbiX"/>
    <property type="match status" value="1"/>
</dbReference>
<dbReference type="InterPro" id="IPR005123">
    <property type="entry name" value="Oxoglu/Fe-dep_dioxygenase_dom"/>
</dbReference>
<dbReference type="InterPro" id="IPR041097">
    <property type="entry name" value="PKHD_C"/>
</dbReference>
<dbReference type="InterPro" id="IPR023550">
    <property type="entry name" value="PKHD_hydroxylase"/>
</dbReference>
<dbReference type="InterPro" id="IPR006620">
    <property type="entry name" value="Pro_4_hyd_alph"/>
</dbReference>
<dbReference type="InterPro" id="IPR044862">
    <property type="entry name" value="Pro_4_hyd_alph_FE2OG_OXY"/>
</dbReference>
<dbReference type="NCBIfam" id="NF003974">
    <property type="entry name" value="PRK05467.1-3"/>
    <property type="match status" value="1"/>
</dbReference>
<dbReference type="NCBIfam" id="NF003975">
    <property type="entry name" value="PRK05467.1-4"/>
    <property type="match status" value="1"/>
</dbReference>
<dbReference type="PANTHER" id="PTHR41536">
    <property type="entry name" value="PKHD-TYPE HYDROXYLASE YBIX"/>
    <property type="match status" value="1"/>
</dbReference>
<dbReference type="PANTHER" id="PTHR41536:SF1">
    <property type="entry name" value="PKHD-TYPE HYDROXYLASE YBIX"/>
    <property type="match status" value="1"/>
</dbReference>
<dbReference type="Pfam" id="PF13640">
    <property type="entry name" value="2OG-FeII_Oxy_3"/>
    <property type="match status" value="1"/>
</dbReference>
<dbReference type="Pfam" id="PF18331">
    <property type="entry name" value="PKHD_C"/>
    <property type="match status" value="1"/>
</dbReference>
<dbReference type="SMART" id="SM00702">
    <property type="entry name" value="P4Hc"/>
    <property type="match status" value="1"/>
</dbReference>
<dbReference type="SUPFAM" id="SSF51197">
    <property type="entry name" value="Clavaminate synthase-like"/>
    <property type="match status" value="1"/>
</dbReference>
<dbReference type="PROSITE" id="PS51471">
    <property type="entry name" value="FE2OG_OXY"/>
    <property type="match status" value="1"/>
</dbReference>
<comment type="cofactor">
    <cofactor evidence="1">
        <name>Fe(2+)</name>
        <dbReference type="ChEBI" id="CHEBI:29033"/>
    </cofactor>
    <text evidence="1">Binds 1 Fe(2+) ion per subunit.</text>
</comment>
<comment type="cofactor">
    <cofactor evidence="1">
        <name>L-ascorbate</name>
        <dbReference type="ChEBI" id="CHEBI:38290"/>
    </cofactor>
</comment>
<protein>
    <recommendedName>
        <fullName evidence="1">PKHD-type hydroxylase A1S_0473</fullName>
        <ecNumber evidence="1">1.14.11.-</ecNumber>
    </recommendedName>
</protein>
<organism>
    <name type="scientific">Acinetobacter baumannii (strain ATCC 17978 / DSM 105126 / CIP 53.77 / LMG 1025 / NCDC KC755 / 5377)</name>
    <dbReference type="NCBI Taxonomy" id="400667"/>
    <lineage>
        <taxon>Bacteria</taxon>
        <taxon>Pseudomonadati</taxon>
        <taxon>Pseudomonadota</taxon>
        <taxon>Gammaproteobacteria</taxon>
        <taxon>Moraxellales</taxon>
        <taxon>Moraxellaceae</taxon>
        <taxon>Acinetobacter</taxon>
        <taxon>Acinetobacter calcoaceticus/baumannii complex</taxon>
    </lineage>
</organism>
<accession>A3M1Y4</accession>
<reference key="1">
    <citation type="journal article" date="2007" name="Genes Dev.">
        <title>New insights into Acinetobacter baumannii pathogenesis revealed by high-density pyrosequencing and transposon mutagenesis.</title>
        <authorList>
            <person name="Smith M.G."/>
            <person name="Gianoulis T.A."/>
            <person name="Pukatzki S."/>
            <person name="Mekalanos J.J."/>
            <person name="Ornston L.N."/>
            <person name="Gerstein M."/>
            <person name="Snyder M."/>
        </authorList>
    </citation>
    <scope>NUCLEOTIDE SEQUENCE [LARGE SCALE GENOMIC DNA]</scope>
    <source>
        <strain>ATCC 17978 / DSM 105126 / CIP 53.77 / LMG 1025 / NCDC KC755 / 5377</strain>
    </source>
</reference>
<proteinExistence type="inferred from homology"/>
<keyword id="KW-0223">Dioxygenase</keyword>
<keyword id="KW-0408">Iron</keyword>
<keyword id="KW-0479">Metal-binding</keyword>
<keyword id="KW-0560">Oxidoreductase</keyword>
<keyword id="KW-0847">Vitamin C</keyword>
<feature type="chain" id="PRO_0000346459" description="PKHD-type hydroxylase A1S_0473">
    <location>
        <begin position="1"/>
        <end position="227"/>
    </location>
</feature>
<feature type="domain" description="Fe2OG dioxygenase" evidence="1">
    <location>
        <begin position="78"/>
        <end position="178"/>
    </location>
</feature>
<feature type="binding site" evidence="1">
    <location>
        <position position="96"/>
    </location>
    <ligand>
        <name>Fe cation</name>
        <dbReference type="ChEBI" id="CHEBI:24875"/>
    </ligand>
</feature>
<feature type="binding site" evidence="1">
    <location>
        <position position="98"/>
    </location>
    <ligand>
        <name>Fe cation</name>
        <dbReference type="ChEBI" id="CHEBI:24875"/>
    </ligand>
</feature>
<feature type="binding site" evidence="1">
    <location>
        <position position="159"/>
    </location>
    <ligand>
        <name>Fe cation</name>
        <dbReference type="ChEBI" id="CHEBI:24875"/>
    </ligand>
</feature>
<feature type="binding site" evidence="1">
    <location>
        <position position="169"/>
    </location>
    <ligand>
        <name>2-oxoglutarate</name>
        <dbReference type="ChEBI" id="CHEBI:16810"/>
    </ligand>
</feature>
<gene>
    <name type="ordered locus">A1S_0473</name>
</gene>